<proteinExistence type="inferred from homology"/>
<keyword id="KW-0963">Cytoplasm</keyword>
<keyword id="KW-0269">Exonuclease</keyword>
<keyword id="KW-0378">Hydrolase</keyword>
<keyword id="KW-0540">Nuclease</keyword>
<keyword id="KW-1185">Reference proteome</keyword>
<gene>
    <name evidence="1" type="primary">xseB</name>
    <name type="ordered locus">VF_0713</name>
</gene>
<protein>
    <recommendedName>
        <fullName evidence="1">Exodeoxyribonuclease 7 small subunit</fullName>
        <ecNumber evidence="1">3.1.11.6</ecNumber>
    </recommendedName>
    <alternativeName>
        <fullName evidence="1">Exodeoxyribonuclease VII small subunit</fullName>
        <shortName evidence="1">Exonuclease VII small subunit</shortName>
    </alternativeName>
</protein>
<accession>Q5E6Y8</accession>
<organism>
    <name type="scientific">Aliivibrio fischeri (strain ATCC 700601 / ES114)</name>
    <name type="common">Vibrio fischeri</name>
    <dbReference type="NCBI Taxonomy" id="312309"/>
    <lineage>
        <taxon>Bacteria</taxon>
        <taxon>Pseudomonadati</taxon>
        <taxon>Pseudomonadota</taxon>
        <taxon>Gammaproteobacteria</taxon>
        <taxon>Vibrionales</taxon>
        <taxon>Vibrionaceae</taxon>
        <taxon>Aliivibrio</taxon>
    </lineage>
</organism>
<comment type="function">
    <text evidence="1">Bidirectionally degrades single-stranded DNA into large acid-insoluble oligonucleotides, which are then degraded further into small acid-soluble oligonucleotides.</text>
</comment>
<comment type="catalytic activity">
    <reaction evidence="1">
        <text>Exonucleolytic cleavage in either 5'- to 3'- or 3'- to 5'-direction to yield nucleoside 5'-phosphates.</text>
        <dbReference type="EC" id="3.1.11.6"/>
    </reaction>
</comment>
<comment type="subunit">
    <text evidence="1">Heterooligomer composed of large and small subunits.</text>
</comment>
<comment type="subcellular location">
    <subcellularLocation>
        <location evidence="1">Cytoplasm</location>
    </subcellularLocation>
</comment>
<comment type="similarity">
    <text evidence="1">Belongs to the XseB family.</text>
</comment>
<evidence type="ECO:0000255" key="1">
    <source>
        <dbReference type="HAMAP-Rule" id="MF_00337"/>
    </source>
</evidence>
<reference key="1">
    <citation type="journal article" date="2005" name="Proc. Natl. Acad. Sci. U.S.A.">
        <title>Complete genome sequence of Vibrio fischeri: a symbiotic bacterium with pathogenic congeners.</title>
        <authorList>
            <person name="Ruby E.G."/>
            <person name="Urbanowski M."/>
            <person name="Campbell J."/>
            <person name="Dunn A."/>
            <person name="Faini M."/>
            <person name="Gunsalus R."/>
            <person name="Lostroh P."/>
            <person name="Lupp C."/>
            <person name="McCann J."/>
            <person name="Millikan D."/>
            <person name="Schaefer A."/>
            <person name="Stabb E."/>
            <person name="Stevens A."/>
            <person name="Visick K."/>
            <person name="Whistler C."/>
            <person name="Greenberg E.P."/>
        </authorList>
    </citation>
    <scope>NUCLEOTIDE SEQUENCE [LARGE SCALE GENOMIC DNA]</scope>
    <source>
        <strain>ATCC 700601 / ES114</strain>
    </source>
</reference>
<sequence length="80" mass="8843">MAVKKPENLSFEAAIEELDSVVNQLESGDLPLEDALKKFERGISLARAGQEKLTQAEQRVEILLQADDNAELTPFDGQDD</sequence>
<dbReference type="EC" id="3.1.11.6" evidence="1"/>
<dbReference type="EMBL" id="CP000020">
    <property type="protein sequence ID" value="AAW85208.1"/>
    <property type="molecule type" value="Genomic_DNA"/>
</dbReference>
<dbReference type="RefSeq" id="WP_005418105.1">
    <property type="nucleotide sequence ID" value="NZ_CAWLES010000001.1"/>
</dbReference>
<dbReference type="RefSeq" id="YP_204096.1">
    <property type="nucleotide sequence ID" value="NC_006840.2"/>
</dbReference>
<dbReference type="SMR" id="Q5E6Y8"/>
<dbReference type="STRING" id="312309.VF_0713"/>
<dbReference type="EnsemblBacteria" id="AAW85208">
    <property type="protein sequence ID" value="AAW85208"/>
    <property type="gene ID" value="VF_0713"/>
</dbReference>
<dbReference type="GeneID" id="54163368"/>
<dbReference type="KEGG" id="vfi:VF_0713"/>
<dbReference type="PATRIC" id="fig|312309.11.peg.707"/>
<dbReference type="eggNOG" id="COG1722">
    <property type="taxonomic scope" value="Bacteria"/>
</dbReference>
<dbReference type="HOGENOM" id="CLU_145918_3_3_6"/>
<dbReference type="OrthoDB" id="5591562at2"/>
<dbReference type="Proteomes" id="UP000000537">
    <property type="component" value="Chromosome I"/>
</dbReference>
<dbReference type="GO" id="GO:0005829">
    <property type="term" value="C:cytosol"/>
    <property type="evidence" value="ECO:0007669"/>
    <property type="project" value="TreeGrafter"/>
</dbReference>
<dbReference type="GO" id="GO:0009318">
    <property type="term" value="C:exodeoxyribonuclease VII complex"/>
    <property type="evidence" value="ECO:0007669"/>
    <property type="project" value="InterPro"/>
</dbReference>
<dbReference type="GO" id="GO:0008855">
    <property type="term" value="F:exodeoxyribonuclease VII activity"/>
    <property type="evidence" value="ECO:0007669"/>
    <property type="project" value="UniProtKB-UniRule"/>
</dbReference>
<dbReference type="GO" id="GO:0006308">
    <property type="term" value="P:DNA catabolic process"/>
    <property type="evidence" value="ECO:0007669"/>
    <property type="project" value="UniProtKB-UniRule"/>
</dbReference>
<dbReference type="Gene3D" id="1.10.287.1040">
    <property type="entry name" value="Exonuclease VII, small subunit"/>
    <property type="match status" value="1"/>
</dbReference>
<dbReference type="HAMAP" id="MF_00337">
    <property type="entry name" value="Exonuc_7_S"/>
    <property type="match status" value="1"/>
</dbReference>
<dbReference type="InterPro" id="IPR003761">
    <property type="entry name" value="Exonuc_VII_S"/>
</dbReference>
<dbReference type="InterPro" id="IPR037004">
    <property type="entry name" value="Exonuc_VII_ssu_sf"/>
</dbReference>
<dbReference type="NCBIfam" id="NF002137">
    <property type="entry name" value="PRK00977.1-1"/>
    <property type="match status" value="1"/>
</dbReference>
<dbReference type="NCBIfam" id="NF002140">
    <property type="entry name" value="PRK00977.1-4"/>
    <property type="match status" value="1"/>
</dbReference>
<dbReference type="NCBIfam" id="TIGR01280">
    <property type="entry name" value="xseB"/>
    <property type="match status" value="1"/>
</dbReference>
<dbReference type="PANTHER" id="PTHR34137">
    <property type="entry name" value="EXODEOXYRIBONUCLEASE 7 SMALL SUBUNIT"/>
    <property type="match status" value="1"/>
</dbReference>
<dbReference type="PANTHER" id="PTHR34137:SF1">
    <property type="entry name" value="EXODEOXYRIBONUCLEASE 7 SMALL SUBUNIT"/>
    <property type="match status" value="1"/>
</dbReference>
<dbReference type="Pfam" id="PF02609">
    <property type="entry name" value="Exonuc_VII_S"/>
    <property type="match status" value="1"/>
</dbReference>
<dbReference type="PIRSF" id="PIRSF006488">
    <property type="entry name" value="Exonuc_VII_S"/>
    <property type="match status" value="1"/>
</dbReference>
<dbReference type="SUPFAM" id="SSF116842">
    <property type="entry name" value="XseB-like"/>
    <property type="match status" value="1"/>
</dbReference>
<feature type="chain" id="PRO_0000207029" description="Exodeoxyribonuclease 7 small subunit">
    <location>
        <begin position="1"/>
        <end position="80"/>
    </location>
</feature>
<name>EX7S_ALIF1</name>